<accession>P52657</accession>
<accession>A8MYQ7</accession>
<accession>Q6FGB5</accession>
<evidence type="ECO:0000250" key="1">
    <source>
        <dbReference type="UniProtKB" id="P52656"/>
    </source>
</evidence>
<evidence type="ECO:0000269" key="2">
    <source>
    </source>
</evidence>
<evidence type="ECO:0000269" key="3">
    <source>
    </source>
</evidence>
<evidence type="ECO:0000269" key="4">
    <source>
    </source>
</evidence>
<evidence type="ECO:0000269" key="5">
    <source>
    </source>
</evidence>
<evidence type="ECO:0000269" key="6">
    <source>
    </source>
</evidence>
<evidence type="ECO:0000305" key="7"/>
<evidence type="ECO:0007829" key="8">
    <source>
        <dbReference type="PDB" id="1NVP"/>
    </source>
</evidence>
<name>T2AG_HUMAN</name>
<feature type="chain" id="PRO_0000194042" description="Transcription initiation factor IIA subunit 2">
    <location>
        <begin position="1"/>
        <end position="109"/>
    </location>
</feature>
<feature type="helix" evidence="8">
    <location>
        <begin position="4"/>
        <end position="7"/>
    </location>
</feature>
<feature type="helix" evidence="8">
    <location>
        <begin position="10"/>
        <end position="24"/>
    </location>
</feature>
<feature type="helix" evidence="8">
    <location>
        <begin position="30"/>
        <end position="50"/>
    </location>
</feature>
<feature type="strand" evidence="8">
    <location>
        <begin position="55"/>
        <end position="68"/>
    </location>
</feature>
<feature type="strand" evidence="8">
    <location>
        <begin position="71"/>
        <end position="82"/>
    </location>
</feature>
<feature type="strand" evidence="8">
    <location>
        <begin position="87"/>
        <end position="98"/>
    </location>
</feature>
<organism>
    <name type="scientific">Homo sapiens</name>
    <name type="common">Human</name>
    <dbReference type="NCBI Taxonomy" id="9606"/>
    <lineage>
        <taxon>Eukaryota</taxon>
        <taxon>Metazoa</taxon>
        <taxon>Chordata</taxon>
        <taxon>Craniata</taxon>
        <taxon>Vertebrata</taxon>
        <taxon>Euteleostomi</taxon>
        <taxon>Mammalia</taxon>
        <taxon>Eutheria</taxon>
        <taxon>Euarchontoglires</taxon>
        <taxon>Primates</taxon>
        <taxon>Haplorrhini</taxon>
        <taxon>Catarrhini</taxon>
        <taxon>Hominidae</taxon>
        <taxon>Homo</taxon>
    </lineage>
</organism>
<comment type="function">
    <text evidence="4">TFIIA is a component of the transcription machinery of RNA polymerase II and plays an important role in transcriptional activation. TFIIA in a complex with TBP mediates transcriptional activity.</text>
</comment>
<comment type="subunit">
    <text evidence="1 2 3 4 5">TFIIA is a heterodimer of the large unprocessed subunit 1 and a small subunit gamma (By similarity). It was originally believed to be a heterotrimer of an alpha (p35), a beta (p19) and a gamma subunit (p12) (By similarity). Interacts with NCOA6 general coactivator (PubMed:10567404). TFIIA forms a complex with TBP (PubMed:11030333). Interacts with HSF1 (via transactivation domain) (PubMed:11005381). Part of TBP-based Pol II pre-initiation complex (PIC), in which Pol II core assembles with general transcription factors and other specific initiation factors including GTF2E1, GTF2E2, GTF2F1, GTF2F2, TCEA1, ERCC2, ERCC3, GTF2H2, GTF2H3, GTF2H4, GTF2H5, GTF2A1, GTF2A2, GTF2B and TBP; this large multi-subunit PIC complex mediates DNA unwinding and targets Pol II core to the transcription start site where the first phosphodiester bond forms.</text>
</comment>
<comment type="subunit">
    <text evidence="6">(Microbial infection) Interacts with SV40 Large T antigen.</text>
</comment>
<comment type="interaction">
    <interactant intactId="EBI-1045262">
        <id>P52657</id>
    </interactant>
    <interactant intactId="EBI-389518">
        <id>P52655</id>
        <label>GTF2A1</label>
    </interactant>
    <organismsDiffer>false</organismsDiffer>
    <experiments>14</experiments>
</comment>
<comment type="interaction">
    <interactant intactId="EBI-1045262">
        <id>P52657</id>
    </interactant>
    <interactant intactId="EBI-355371">
        <id>P20226</id>
        <label>TBP</label>
    </interactant>
    <organismsDiffer>false</organismsDiffer>
    <experiments>3</experiments>
</comment>
<comment type="interaction">
    <interactant intactId="EBI-1045262">
        <id>P52657</id>
    </interactant>
    <interactant intactId="EBI-2813981">
        <id>Q9C029</id>
        <label>TRIM7</label>
    </interactant>
    <organismsDiffer>false</organismsDiffer>
    <experiments>3</experiments>
</comment>
<comment type="subcellular location">
    <subcellularLocation>
        <location>Nucleus</location>
    </subcellularLocation>
</comment>
<comment type="similarity">
    <text evidence="7">Belongs to the TFIIA subunit 2 family.</text>
</comment>
<proteinExistence type="evidence at protein level"/>
<sequence>MAYQLYRNTTLGNSLQESLDELIQSQQITPQLALQVLLQFDKAINAALAQRVRNRVNFRGSLNTYRFCDNVWTFVLNDVEFREVTELIKVDKVKIVACDGKNTGSNTTE</sequence>
<dbReference type="EMBL" id="X81713">
    <property type="protein sequence ID" value="CAA57357.1"/>
    <property type="molecule type" value="mRNA"/>
</dbReference>
<dbReference type="EMBL" id="U14193">
    <property type="protein sequence ID" value="AAA64951.1"/>
    <property type="molecule type" value="mRNA"/>
</dbReference>
<dbReference type="EMBL" id="U21242">
    <property type="protein sequence ID" value="AAB58247.1"/>
    <property type="molecule type" value="mRNA"/>
</dbReference>
<dbReference type="EMBL" id="BT007362">
    <property type="protein sequence ID" value="AAP36026.1"/>
    <property type="molecule type" value="mRNA"/>
</dbReference>
<dbReference type="EMBL" id="CR542192">
    <property type="protein sequence ID" value="CAG46989.1"/>
    <property type="molecule type" value="mRNA"/>
</dbReference>
<dbReference type="EMBL" id="AC092755">
    <property type="status" value="NOT_ANNOTATED_CDS"/>
    <property type="molecule type" value="Genomic_DNA"/>
</dbReference>
<dbReference type="EMBL" id="CH471082">
    <property type="protein sequence ID" value="EAW77573.1"/>
    <property type="molecule type" value="Genomic_DNA"/>
</dbReference>
<dbReference type="EMBL" id="BC000287">
    <property type="protein sequence ID" value="AAH00287.1"/>
    <property type="molecule type" value="mRNA"/>
</dbReference>
<dbReference type="EMBL" id="BC001919">
    <property type="protein sequence ID" value="AAH01919.1"/>
    <property type="molecule type" value="mRNA"/>
</dbReference>
<dbReference type="CCDS" id="CCDS10173.1"/>
<dbReference type="PIR" id="I38952">
    <property type="entry name" value="I38952"/>
</dbReference>
<dbReference type="RefSeq" id="NP_001307858.1">
    <property type="nucleotide sequence ID" value="NM_001320929.2"/>
</dbReference>
<dbReference type="RefSeq" id="NP_001307859.1">
    <property type="nucleotide sequence ID" value="NM_001320930.2"/>
</dbReference>
<dbReference type="RefSeq" id="NP_004483.1">
    <property type="nucleotide sequence ID" value="NM_004492.3"/>
</dbReference>
<dbReference type="PDB" id="1NVP">
    <property type="method" value="X-ray"/>
    <property type="resolution" value="2.10 A"/>
    <property type="chains" value="D=2-109"/>
</dbReference>
<dbReference type="PDB" id="5FUR">
    <property type="method" value="EM"/>
    <property type="resolution" value="8.50 A"/>
    <property type="chains" value="D=3-99"/>
</dbReference>
<dbReference type="PDB" id="5IY6">
    <property type="method" value="EM"/>
    <property type="resolution" value="7.20 A"/>
    <property type="chains" value="O=1-109"/>
</dbReference>
<dbReference type="PDB" id="5IY7">
    <property type="method" value="EM"/>
    <property type="resolution" value="8.60 A"/>
    <property type="chains" value="O=1-109"/>
</dbReference>
<dbReference type="PDB" id="5IY8">
    <property type="method" value="EM"/>
    <property type="resolution" value="7.90 A"/>
    <property type="chains" value="O=1-109"/>
</dbReference>
<dbReference type="PDB" id="5IY9">
    <property type="method" value="EM"/>
    <property type="resolution" value="6.30 A"/>
    <property type="chains" value="O=1-109"/>
</dbReference>
<dbReference type="PDB" id="5IYA">
    <property type="method" value="EM"/>
    <property type="resolution" value="5.40 A"/>
    <property type="chains" value="O=1-109"/>
</dbReference>
<dbReference type="PDB" id="5IYB">
    <property type="method" value="EM"/>
    <property type="resolution" value="3.90 A"/>
    <property type="chains" value="O=1-109"/>
</dbReference>
<dbReference type="PDB" id="5IYC">
    <property type="method" value="EM"/>
    <property type="resolution" value="3.90 A"/>
    <property type="chains" value="O=1-109"/>
</dbReference>
<dbReference type="PDB" id="5IYD">
    <property type="method" value="EM"/>
    <property type="resolution" value="3.90 A"/>
    <property type="chains" value="O=1-109"/>
</dbReference>
<dbReference type="PDB" id="5M4S">
    <property type="method" value="X-ray"/>
    <property type="resolution" value="2.38 A"/>
    <property type="chains" value="A=2-103"/>
</dbReference>
<dbReference type="PDB" id="6MZM">
    <property type="method" value="EM"/>
    <property type="resolution" value="7.50 A"/>
    <property type="chains" value="X=3-99"/>
</dbReference>
<dbReference type="PDB" id="6O9L">
    <property type="method" value="EM"/>
    <property type="resolution" value="7.20 A"/>
    <property type="chains" value="O=1-109"/>
</dbReference>
<dbReference type="PDB" id="7EDX">
    <property type="method" value="EM"/>
    <property type="resolution" value="4.50 A"/>
    <property type="chains" value="O=1-109"/>
</dbReference>
<dbReference type="PDB" id="7EG7">
    <property type="method" value="EM"/>
    <property type="resolution" value="6.20 A"/>
    <property type="chains" value="O=1-109"/>
</dbReference>
<dbReference type="PDB" id="7EG8">
    <property type="method" value="EM"/>
    <property type="resolution" value="7.40 A"/>
    <property type="chains" value="O=1-109"/>
</dbReference>
<dbReference type="PDB" id="7EG9">
    <property type="method" value="EM"/>
    <property type="resolution" value="3.70 A"/>
    <property type="chains" value="O=1-109"/>
</dbReference>
<dbReference type="PDB" id="7EGA">
    <property type="method" value="EM"/>
    <property type="resolution" value="4.10 A"/>
    <property type="chains" value="O=1-109"/>
</dbReference>
<dbReference type="PDB" id="7EGB">
    <property type="method" value="EM"/>
    <property type="resolution" value="3.30 A"/>
    <property type="chains" value="O=1-109"/>
</dbReference>
<dbReference type="PDB" id="7EGC">
    <property type="method" value="EM"/>
    <property type="resolution" value="3.90 A"/>
    <property type="chains" value="O=1-109"/>
</dbReference>
<dbReference type="PDB" id="7EGD">
    <property type="method" value="EM"/>
    <property type="resolution" value="6.75 A"/>
    <property type="chains" value="O=1-109"/>
</dbReference>
<dbReference type="PDB" id="7EGI">
    <property type="method" value="EM"/>
    <property type="resolution" value="9.82 A"/>
    <property type="chains" value="O=1-109"/>
</dbReference>
<dbReference type="PDB" id="7EGJ">
    <property type="method" value="EM"/>
    <property type="resolution" value="8.64 A"/>
    <property type="chains" value="O=1-109"/>
</dbReference>
<dbReference type="PDB" id="7ENA">
    <property type="method" value="EM"/>
    <property type="resolution" value="4.07 A"/>
    <property type="chains" value="DO=1-109"/>
</dbReference>
<dbReference type="PDB" id="7ENC">
    <property type="method" value="EM"/>
    <property type="resolution" value="4.13 A"/>
    <property type="chains" value="DO=1-109"/>
</dbReference>
<dbReference type="PDB" id="7LBM">
    <property type="method" value="EM"/>
    <property type="resolution" value="4.80 A"/>
    <property type="chains" value="N=1-109"/>
</dbReference>
<dbReference type="PDB" id="7NVR">
    <property type="method" value="EM"/>
    <property type="resolution" value="4.50 A"/>
    <property type="chains" value="V=1-109"/>
</dbReference>
<dbReference type="PDB" id="7NVS">
    <property type="method" value="EM"/>
    <property type="resolution" value="2.80 A"/>
    <property type="chains" value="V=1-109"/>
</dbReference>
<dbReference type="PDB" id="7NVT">
    <property type="method" value="EM"/>
    <property type="resolution" value="2.90 A"/>
    <property type="chains" value="V=1-109"/>
</dbReference>
<dbReference type="PDB" id="7NVU">
    <property type="method" value="EM"/>
    <property type="resolution" value="2.50 A"/>
    <property type="chains" value="V=1-109"/>
</dbReference>
<dbReference type="PDB" id="7NVY">
    <property type="method" value="EM"/>
    <property type="resolution" value="7.30 A"/>
    <property type="chains" value="V=1-109"/>
</dbReference>
<dbReference type="PDB" id="7NVZ">
    <property type="method" value="EM"/>
    <property type="resolution" value="7.20 A"/>
    <property type="chains" value="V=1-109"/>
</dbReference>
<dbReference type="PDB" id="7NW0">
    <property type="method" value="EM"/>
    <property type="resolution" value="6.60 A"/>
    <property type="chains" value="V=1-109"/>
</dbReference>
<dbReference type="PDB" id="7ZWC">
    <property type="method" value="EM"/>
    <property type="resolution" value="3.20 A"/>
    <property type="chains" value="V=1-109"/>
</dbReference>
<dbReference type="PDB" id="7ZWD">
    <property type="method" value="EM"/>
    <property type="resolution" value="3.00 A"/>
    <property type="chains" value="V=1-109"/>
</dbReference>
<dbReference type="PDB" id="7ZX7">
    <property type="method" value="EM"/>
    <property type="resolution" value="3.40 A"/>
    <property type="chains" value="V=1-109"/>
</dbReference>
<dbReference type="PDB" id="7ZX8">
    <property type="method" value="EM"/>
    <property type="resolution" value="3.00 A"/>
    <property type="chains" value="V=1-109"/>
</dbReference>
<dbReference type="PDB" id="7ZXE">
    <property type="method" value="EM"/>
    <property type="resolution" value="3.50 A"/>
    <property type="chains" value="V=1-109"/>
</dbReference>
<dbReference type="PDB" id="8BVW">
    <property type="method" value="EM"/>
    <property type="resolution" value="4.00 A"/>
    <property type="chains" value="V=1-109"/>
</dbReference>
<dbReference type="PDB" id="8BYQ">
    <property type="method" value="EM"/>
    <property type="resolution" value="4.10 A"/>
    <property type="chains" value="V=1-109"/>
</dbReference>
<dbReference type="PDB" id="8BZ1">
    <property type="method" value="EM"/>
    <property type="resolution" value="3.80 A"/>
    <property type="chains" value="V=1-109"/>
</dbReference>
<dbReference type="PDB" id="8GXQ">
    <property type="method" value="EM"/>
    <property type="resolution" value="5.04 A"/>
    <property type="chains" value="DO=1-109"/>
</dbReference>
<dbReference type="PDB" id="8GXS">
    <property type="method" value="EM"/>
    <property type="resolution" value="4.16 A"/>
    <property type="chains" value="DO=1-109"/>
</dbReference>
<dbReference type="PDB" id="8S51">
    <property type="method" value="EM"/>
    <property type="resolution" value="3.10 A"/>
    <property type="chains" value="V=1-109"/>
</dbReference>
<dbReference type="PDB" id="8S52">
    <property type="method" value="EM"/>
    <property type="resolution" value="2.90 A"/>
    <property type="chains" value="V=1-109"/>
</dbReference>
<dbReference type="PDB" id="8S5N">
    <property type="method" value="EM"/>
    <property type="resolution" value="3.40 A"/>
    <property type="chains" value="V=1-109"/>
</dbReference>
<dbReference type="PDB" id="8WAK">
    <property type="method" value="EM"/>
    <property type="resolution" value="5.47 A"/>
    <property type="chains" value="O=1-109"/>
</dbReference>
<dbReference type="PDB" id="8WAL">
    <property type="method" value="EM"/>
    <property type="resolution" value="8.52 A"/>
    <property type="chains" value="O=1-109"/>
</dbReference>
<dbReference type="PDB" id="8WAN">
    <property type="method" value="EM"/>
    <property type="resolution" value="6.07 A"/>
    <property type="chains" value="O=1-109"/>
</dbReference>
<dbReference type="PDB" id="8WAO">
    <property type="method" value="EM"/>
    <property type="resolution" value="6.40 A"/>
    <property type="chains" value="O=1-109"/>
</dbReference>
<dbReference type="PDB" id="8WAP">
    <property type="method" value="EM"/>
    <property type="resolution" value="5.85 A"/>
    <property type="chains" value="O=1-109"/>
</dbReference>
<dbReference type="PDB" id="8WAQ">
    <property type="method" value="EM"/>
    <property type="resolution" value="6.29 A"/>
    <property type="chains" value="O=1-109"/>
</dbReference>
<dbReference type="PDB" id="8WAR">
    <property type="method" value="EM"/>
    <property type="resolution" value="7.20 A"/>
    <property type="chains" value="O=1-109"/>
</dbReference>
<dbReference type="PDB" id="8WAS">
    <property type="method" value="EM"/>
    <property type="resolution" value="6.13 A"/>
    <property type="chains" value="O=1-109"/>
</dbReference>
<dbReference type="PDBsum" id="1NVP"/>
<dbReference type="PDBsum" id="5FUR"/>
<dbReference type="PDBsum" id="5IY6"/>
<dbReference type="PDBsum" id="5IY7"/>
<dbReference type="PDBsum" id="5IY8"/>
<dbReference type="PDBsum" id="5IY9"/>
<dbReference type="PDBsum" id="5IYA"/>
<dbReference type="PDBsum" id="5IYB"/>
<dbReference type="PDBsum" id="5IYC"/>
<dbReference type="PDBsum" id="5IYD"/>
<dbReference type="PDBsum" id="5M4S"/>
<dbReference type="PDBsum" id="6MZM"/>
<dbReference type="PDBsum" id="6O9L"/>
<dbReference type="PDBsum" id="7EDX"/>
<dbReference type="PDBsum" id="7EG7"/>
<dbReference type="PDBsum" id="7EG8"/>
<dbReference type="PDBsum" id="7EG9"/>
<dbReference type="PDBsum" id="7EGA"/>
<dbReference type="PDBsum" id="7EGB"/>
<dbReference type="PDBsum" id="7EGC"/>
<dbReference type="PDBsum" id="7EGD"/>
<dbReference type="PDBsum" id="7EGI"/>
<dbReference type="PDBsum" id="7EGJ"/>
<dbReference type="PDBsum" id="7ENA"/>
<dbReference type="PDBsum" id="7ENC"/>
<dbReference type="PDBsum" id="7LBM"/>
<dbReference type="PDBsum" id="7NVR"/>
<dbReference type="PDBsum" id="7NVS"/>
<dbReference type="PDBsum" id="7NVT"/>
<dbReference type="PDBsum" id="7NVU"/>
<dbReference type="PDBsum" id="7NVY"/>
<dbReference type="PDBsum" id="7NVZ"/>
<dbReference type="PDBsum" id="7NW0"/>
<dbReference type="PDBsum" id="7ZWC"/>
<dbReference type="PDBsum" id="7ZWD"/>
<dbReference type="PDBsum" id="7ZX7"/>
<dbReference type="PDBsum" id="7ZX8"/>
<dbReference type="PDBsum" id="7ZXE"/>
<dbReference type="PDBsum" id="8BVW"/>
<dbReference type="PDBsum" id="8BYQ"/>
<dbReference type="PDBsum" id="8BZ1"/>
<dbReference type="PDBsum" id="8GXQ"/>
<dbReference type="PDBsum" id="8GXS"/>
<dbReference type="PDBsum" id="8S51"/>
<dbReference type="PDBsum" id="8S52"/>
<dbReference type="PDBsum" id="8S5N"/>
<dbReference type="PDBsum" id="8WAK"/>
<dbReference type="PDBsum" id="8WAL"/>
<dbReference type="PDBsum" id="8WAN"/>
<dbReference type="PDBsum" id="8WAO"/>
<dbReference type="PDBsum" id="8WAP"/>
<dbReference type="PDBsum" id="8WAQ"/>
<dbReference type="PDBsum" id="8WAR"/>
<dbReference type="PDBsum" id="8WAS"/>
<dbReference type="EMDB" id="EMD-12610"/>
<dbReference type="EMDB" id="EMD-12611"/>
<dbReference type="EMDB" id="EMD-12612"/>
<dbReference type="EMDB" id="EMD-12613"/>
<dbReference type="EMDB" id="EMD-12617"/>
<dbReference type="EMDB" id="EMD-12618"/>
<dbReference type="EMDB" id="EMD-12619"/>
<dbReference type="EMDB" id="EMD-14996"/>
<dbReference type="EMDB" id="EMD-14997"/>
<dbReference type="EMDB" id="EMD-15006"/>
<dbReference type="EMDB" id="EMD-15007"/>
<dbReference type="EMDB" id="EMD-15009"/>
<dbReference type="EMDB" id="EMD-16274"/>
<dbReference type="EMDB" id="EMD-16331"/>
<dbReference type="EMDB" id="EMD-16335"/>
<dbReference type="EMDB" id="EMD-19718"/>
<dbReference type="EMDB" id="EMD-19719"/>
<dbReference type="EMDB" id="EMD-19743"/>
<dbReference type="EMDB" id="EMD-23255"/>
<dbReference type="EMDB" id="EMD-31075"/>
<dbReference type="EMDB" id="EMD-31107"/>
<dbReference type="EMDB" id="EMD-31108"/>
<dbReference type="EMDB" id="EMD-31109"/>
<dbReference type="EMDB" id="EMD-31110"/>
<dbReference type="EMDB" id="EMD-31111"/>
<dbReference type="EMDB" id="EMD-31112"/>
<dbReference type="EMDB" id="EMD-31113"/>
<dbReference type="EMDB" id="EMD-31118"/>
<dbReference type="EMDB" id="EMD-31119"/>
<dbReference type="EMDB" id="EMD-31204"/>
<dbReference type="EMDB" id="EMD-31207"/>
<dbReference type="EMDB" id="EMD-34359"/>
<dbReference type="EMDB" id="EMD-34360"/>
<dbReference type="EMDB" id="EMD-37395"/>
<dbReference type="EMDB" id="EMD-37396"/>
<dbReference type="EMDB" id="EMD-37398"/>
<dbReference type="EMDB" id="EMD-37399"/>
<dbReference type="EMDB" id="EMD-37400"/>
<dbReference type="EMDB" id="EMD-37401"/>
<dbReference type="EMDB" id="EMD-37402"/>
<dbReference type="EMDB" id="EMD-37403"/>
<dbReference type="EMDB" id="EMD-8132"/>
<dbReference type="EMDB" id="EMD-8133"/>
<dbReference type="EMDB" id="EMD-8134"/>
<dbReference type="EMDB" id="EMD-8135"/>
<dbReference type="EMDB" id="EMD-8136"/>
<dbReference type="EMDB" id="EMD-8137"/>
<dbReference type="EMDB" id="EMD-8138"/>
<dbReference type="EMDB" id="EMD-9306"/>
<dbReference type="SMR" id="P52657"/>
<dbReference type="BioGRID" id="109213">
    <property type="interactions" value="23"/>
</dbReference>
<dbReference type="ComplexPortal" id="CPX-519">
    <property type="entry name" value="General transcription factor complex TFIIA"/>
</dbReference>
<dbReference type="CORUM" id="P52657"/>
<dbReference type="DIP" id="DIP-40648N"/>
<dbReference type="FunCoup" id="P52657">
    <property type="interactions" value="2564"/>
</dbReference>
<dbReference type="IntAct" id="P52657">
    <property type="interactions" value="14"/>
</dbReference>
<dbReference type="STRING" id="9606.ENSP00000379372"/>
<dbReference type="iPTMnet" id="P52657"/>
<dbReference type="PhosphoSitePlus" id="P52657"/>
<dbReference type="BioMuta" id="GTF2A2"/>
<dbReference type="DMDM" id="1729806"/>
<dbReference type="jPOST" id="P52657"/>
<dbReference type="MassIVE" id="P52657"/>
<dbReference type="PaxDb" id="9606-ENSP00000379372"/>
<dbReference type="PeptideAtlas" id="P52657"/>
<dbReference type="ProteomicsDB" id="56501"/>
<dbReference type="Pumba" id="P52657"/>
<dbReference type="TopDownProteomics" id="P52657"/>
<dbReference type="Antibodypedia" id="25406">
    <property type="antibodies" value="98 antibodies from 21 providers"/>
</dbReference>
<dbReference type="DNASU" id="2958"/>
<dbReference type="Ensembl" id="ENST00000396060.7">
    <property type="protein sequence ID" value="ENSP00000379372.2"/>
    <property type="gene ID" value="ENSG00000140307.11"/>
</dbReference>
<dbReference type="Ensembl" id="ENST00000396061.5">
    <property type="protein sequence ID" value="ENSP00000379373.1"/>
    <property type="gene ID" value="ENSG00000140307.11"/>
</dbReference>
<dbReference type="Ensembl" id="ENST00000396063.5">
    <property type="protein sequence ID" value="ENSP00000379375.1"/>
    <property type="gene ID" value="ENSG00000140307.11"/>
</dbReference>
<dbReference type="GeneID" id="2958"/>
<dbReference type="KEGG" id="hsa:2958"/>
<dbReference type="MANE-Select" id="ENST00000396060.7">
    <property type="protein sequence ID" value="ENSP00000379372.2"/>
    <property type="RefSeq nucleotide sequence ID" value="NM_004492.3"/>
    <property type="RefSeq protein sequence ID" value="NP_004483.1"/>
</dbReference>
<dbReference type="UCSC" id="uc002agg.3">
    <property type="organism name" value="human"/>
</dbReference>
<dbReference type="AGR" id="HGNC:4647"/>
<dbReference type="CTD" id="2958"/>
<dbReference type="DisGeNET" id="2958"/>
<dbReference type="GeneCards" id="GTF2A2"/>
<dbReference type="HGNC" id="HGNC:4647">
    <property type="gene designation" value="GTF2A2"/>
</dbReference>
<dbReference type="HPA" id="ENSG00000140307">
    <property type="expression patterns" value="Low tissue specificity"/>
</dbReference>
<dbReference type="MIM" id="600519">
    <property type="type" value="gene"/>
</dbReference>
<dbReference type="neXtProt" id="NX_P52657"/>
<dbReference type="OpenTargets" id="ENSG00000140307"/>
<dbReference type="PharmGKB" id="PA29034"/>
<dbReference type="VEuPathDB" id="HostDB:ENSG00000140307"/>
<dbReference type="eggNOG" id="KOG3463">
    <property type="taxonomic scope" value="Eukaryota"/>
</dbReference>
<dbReference type="GeneTree" id="ENSGT00390000014572"/>
<dbReference type="InParanoid" id="P52657"/>
<dbReference type="OMA" id="QYYELYR"/>
<dbReference type="OrthoDB" id="586585at2759"/>
<dbReference type="PAN-GO" id="P52657">
    <property type="GO annotations" value="4 GO annotations based on evolutionary models"/>
</dbReference>
<dbReference type="PhylomeDB" id="P52657"/>
<dbReference type="TreeFam" id="TF315131"/>
<dbReference type="PathwayCommons" id="P52657"/>
<dbReference type="Reactome" id="R-HSA-167161">
    <property type="pathway name" value="HIV Transcription Initiation"/>
</dbReference>
<dbReference type="Reactome" id="R-HSA-167162">
    <property type="pathway name" value="RNA Polymerase II HIV Promoter Escape"/>
</dbReference>
<dbReference type="Reactome" id="R-HSA-167172">
    <property type="pathway name" value="Transcription of the HIV genome"/>
</dbReference>
<dbReference type="Reactome" id="R-HSA-674695">
    <property type="pathway name" value="RNA Polymerase II Pre-transcription Events"/>
</dbReference>
<dbReference type="Reactome" id="R-HSA-6807505">
    <property type="pathway name" value="RNA polymerase II transcribes snRNA genes"/>
</dbReference>
<dbReference type="Reactome" id="R-HSA-73776">
    <property type="pathway name" value="RNA Polymerase II Promoter Escape"/>
</dbReference>
<dbReference type="Reactome" id="R-HSA-73779">
    <property type="pathway name" value="RNA Polymerase II Transcription Pre-Initiation And Promoter Opening"/>
</dbReference>
<dbReference type="Reactome" id="R-HSA-75953">
    <property type="pathway name" value="RNA Polymerase II Transcription Initiation"/>
</dbReference>
<dbReference type="Reactome" id="R-HSA-76042">
    <property type="pathway name" value="RNA Polymerase II Transcription Initiation And Promoter Clearance"/>
</dbReference>
<dbReference type="Reactome" id="R-HSA-9018519">
    <property type="pathway name" value="Estrogen-dependent gene expression"/>
</dbReference>
<dbReference type="SignaLink" id="P52657"/>
<dbReference type="SIGNOR" id="P52657"/>
<dbReference type="BioGRID-ORCS" id="2958">
    <property type="hits" value="816 hits in 1151 CRISPR screens"/>
</dbReference>
<dbReference type="ChiTaRS" id="GTF2A2">
    <property type="organism name" value="human"/>
</dbReference>
<dbReference type="EvolutionaryTrace" id="P52657"/>
<dbReference type="GenomeRNAi" id="2958"/>
<dbReference type="Pharos" id="P52657">
    <property type="development level" value="Tbio"/>
</dbReference>
<dbReference type="PRO" id="PR:P52657"/>
<dbReference type="Proteomes" id="UP000005640">
    <property type="component" value="Chromosome 15"/>
</dbReference>
<dbReference type="RNAct" id="P52657">
    <property type="molecule type" value="protein"/>
</dbReference>
<dbReference type="Bgee" id="ENSG00000140307">
    <property type="expression patterns" value="Expressed in left testis and 208 other cell types or tissues"/>
</dbReference>
<dbReference type="ExpressionAtlas" id="P52657">
    <property type="expression patterns" value="baseline and differential"/>
</dbReference>
<dbReference type="GO" id="GO:0005829">
    <property type="term" value="C:cytosol"/>
    <property type="evidence" value="ECO:0000314"/>
    <property type="project" value="HPA"/>
</dbReference>
<dbReference type="GO" id="GO:0005654">
    <property type="term" value="C:nucleoplasm"/>
    <property type="evidence" value="ECO:0000314"/>
    <property type="project" value="HPA"/>
</dbReference>
<dbReference type="GO" id="GO:0005634">
    <property type="term" value="C:nucleus"/>
    <property type="evidence" value="ECO:0000314"/>
    <property type="project" value="ComplexPortal"/>
</dbReference>
<dbReference type="GO" id="GO:0005672">
    <property type="term" value="C:transcription factor TFIIA complex"/>
    <property type="evidence" value="ECO:0000314"/>
    <property type="project" value="BHF-UCL"/>
</dbReference>
<dbReference type="GO" id="GO:0005669">
    <property type="term" value="C:transcription factor TFIID complex"/>
    <property type="evidence" value="ECO:0000314"/>
    <property type="project" value="UniProtKB"/>
</dbReference>
<dbReference type="GO" id="GO:0046982">
    <property type="term" value="F:protein heterodimerization activity"/>
    <property type="evidence" value="ECO:0000353"/>
    <property type="project" value="BHF-UCL"/>
</dbReference>
<dbReference type="GO" id="GO:0042803">
    <property type="term" value="F:protein homodimerization activity"/>
    <property type="evidence" value="ECO:0000353"/>
    <property type="project" value="BHF-UCL"/>
</dbReference>
<dbReference type="GO" id="GO:0016251">
    <property type="term" value="F:RNA polymerase II general transcription initiation factor activity"/>
    <property type="evidence" value="ECO:0000314"/>
    <property type="project" value="ARUK-UCL"/>
</dbReference>
<dbReference type="GO" id="GO:0001091">
    <property type="term" value="F:RNA polymerase II general transcription initiation factor binding"/>
    <property type="evidence" value="ECO:0000353"/>
    <property type="project" value="BHF-UCL"/>
</dbReference>
<dbReference type="GO" id="GO:0061629">
    <property type="term" value="F:RNA polymerase II-specific DNA-binding transcription factor binding"/>
    <property type="evidence" value="ECO:0007669"/>
    <property type="project" value="Ensembl"/>
</dbReference>
<dbReference type="GO" id="GO:0017025">
    <property type="term" value="F:TBP-class protein binding"/>
    <property type="evidence" value="ECO:0000353"/>
    <property type="project" value="BHF-UCL"/>
</dbReference>
<dbReference type="GO" id="GO:0045944">
    <property type="term" value="P:positive regulation of transcription by RNA polymerase II"/>
    <property type="evidence" value="ECO:0000314"/>
    <property type="project" value="ComplexPortal"/>
</dbReference>
<dbReference type="GO" id="GO:0060261">
    <property type="term" value="P:positive regulation of transcription initiation by RNA polymerase II"/>
    <property type="evidence" value="ECO:0000314"/>
    <property type="project" value="ComplexPortal"/>
</dbReference>
<dbReference type="GO" id="GO:0051123">
    <property type="term" value="P:RNA polymerase II preinitiation complex assembly"/>
    <property type="evidence" value="ECO:0000314"/>
    <property type="project" value="BHF-UCL"/>
</dbReference>
<dbReference type="GO" id="GO:0006366">
    <property type="term" value="P:transcription by RNA polymerase II"/>
    <property type="evidence" value="ECO:0000314"/>
    <property type="project" value="ARUK-UCL"/>
</dbReference>
<dbReference type="GO" id="GO:0006367">
    <property type="term" value="P:transcription initiation at RNA polymerase II promoter"/>
    <property type="evidence" value="ECO:0000314"/>
    <property type="project" value="BHF-UCL"/>
</dbReference>
<dbReference type="CDD" id="cd10014">
    <property type="entry name" value="TFIIA_gamma_C"/>
    <property type="match status" value="1"/>
</dbReference>
<dbReference type="CDD" id="cd10145">
    <property type="entry name" value="TFIIA_gamma_N"/>
    <property type="match status" value="1"/>
</dbReference>
<dbReference type="FunFam" id="1.10.287.190:FF:000001">
    <property type="entry name" value="Transcription initiation factor IIA subunit 2"/>
    <property type="match status" value="1"/>
</dbReference>
<dbReference type="FunFam" id="2.30.18.10:FF:000001">
    <property type="entry name" value="Transcription initiation factor IIA subunit 2"/>
    <property type="match status" value="1"/>
</dbReference>
<dbReference type="Gene3D" id="2.30.18.10">
    <property type="entry name" value="Transcription factor IIA (TFIIA), beta-barrel domain"/>
    <property type="match status" value="1"/>
</dbReference>
<dbReference type="Gene3D" id="1.10.287.190">
    <property type="entry name" value="Transcription factor IIA gamma subunit, alpha-helical domain"/>
    <property type="match status" value="1"/>
</dbReference>
<dbReference type="IDEAL" id="IID00556"/>
<dbReference type="InterPro" id="IPR009083">
    <property type="entry name" value="TFIIA_a-hlx"/>
</dbReference>
<dbReference type="InterPro" id="IPR009088">
    <property type="entry name" value="TFIIA_b-brl"/>
</dbReference>
<dbReference type="InterPro" id="IPR003194">
    <property type="entry name" value="TFIIA_gsu"/>
</dbReference>
<dbReference type="InterPro" id="IPR015871">
    <property type="entry name" value="TFIIA_gsu_C"/>
</dbReference>
<dbReference type="InterPro" id="IPR015872">
    <property type="entry name" value="TFIIA_gsu_N"/>
</dbReference>
<dbReference type="PANTHER" id="PTHR10966">
    <property type="entry name" value="TRANSCRIPTION INITIATION FACTOR IIA SUBUNIT 2"/>
    <property type="match status" value="1"/>
</dbReference>
<dbReference type="Pfam" id="PF02751">
    <property type="entry name" value="TFIIA_gamma_C"/>
    <property type="match status" value="1"/>
</dbReference>
<dbReference type="Pfam" id="PF02268">
    <property type="entry name" value="TFIIA_gamma_N"/>
    <property type="match status" value="1"/>
</dbReference>
<dbReference type="PIRSF" id="PIRSF009415">
    <property type="entry name" value="Hum_TFIIA_gamma"/>
    <property type="match status" value="1"/>
</dbReference>
<dbReference type="SUPFAM" id="SSF47396">
    <property type="entry name" value="Transcription factor IIA (TFIIA), alpha-helical domain"/>
    <property type="match status" value="1"/>
</dbReference>
<dbReference type="SUPFAM" id="SSF50784">
    <property type="entry name" value="Transcription factor IIA (TFIIA), beta-barrel domain"/>
    <property type="match status" value="1"/>
</dbReference>
<protein>
    <recommendedName>
        <fullName>Transcription initiation factor IIA subunit 2</fullName>
    </recommendedName>
    <alternativeName>
        <fullName>General transcription factor IIA subunit 2</fullName>
    </alternativeName>
    <alternativeName>
        <fullName>TFIIA p12 subunit</fullName>
        <shortName>TFIIA-12</shortName>
        <shortName>TFIIAS</shortName>
    </alternativeName>
    <alternativeName>
        <fullName>Transcription initiation factor IIA gamma chain</fullName>
        <shortName>TFIIA-gamma</shortName>
    </alternativeName>
</protein>
<keyword id="KW-0002">3D-structure</keyword>
<keyword id="KW-0945">Host-virus interaction</keyword>
<keyword id="KW-0539">Nucleus</keyword>
<keyword id="KW-1267">Proteomics identification</keyword>
<keyword id="KW-1185">Reference proteome</keyword>
<keyword id="KW-0804">Transcription</keyword>
<keyword id="KW-0805">Transcription regulation</keyword>
<gene>
    <name type="primary">GTF2A2</name>
    <name type="synonym">TF2A2</name>
</gene>
<reference key="1">
    <citation type="journal article" date="1994" name="Genes Dev.">
        <title>Reconstitution of human TFIIA activity from recombinant polypeptides: a role in TFIID-mediated transcription.</title>
        <authorList>
            <person name="Sun X."/>
            <person name="Ma D."/>
            <person name="Sheldon M."/>
            <person name="Yeung K."/>
            <person name="Reinberg D."/>
        </authorList>
    </citation>
    <scope>NUCLEOTIDE SEQUENCE [MRNA]</scope>
</reference>
<reference key="2">
    <citation type="journal article" date="1994" name="Genes Dev.">
        <title>Molecular cloning of the small (gamma) subunit of human TFIIA reveals functions critical for activated transcription.</title>
        <authorList>
            <person name="Ozer J."/>
            <person name="Moore P.A."/>
            <person name="Bolden A.H."/>
            <person name="Lee A."/>
            <person name="Rosen C.A."/>
            <person name="Lieberman P.M."/>
        </authorList>
    </citation>
    <scope>NUCLEOTIDE SEQUENCE [MRNA]</scope>
</reference>
<reference key="3">
    <citation type="journal article" date="1995" name="Proc. Natl. Acad. Sci. U.S.A.">
        <title>Human general transcription factor TFIIA: characterization of a cDNA encoding the small subunit and requirement for basal and activated transcription.</title>
        <authorList>
            <person name="Dejong J."/>
            <person name="Bernstein R."/>
            <person name="Roeder R.G."/>
        </authorList>
    </citation>
    <scope>NUCLEOTIDE SEQUENCE [MRNA]</scope>
</reference>
<reference key="4">
    <citation type="submission" date="2003-05" db="EMBL/GenBank/DDBJ databases">
        <title>Cloning of human full-length CDSs in BD Creator(TM) system donor vector.</title>
        <authorList>
            <person name="Kalnine N."/>
            <person name="Chen X."/>
            <person name="Rolfs A."/>
            <person name="Halleck A."/>
            <person name="Hines L."/>
            <person name="Eisenstein S."/>
            <person name="Koundinya M."/>
            <person name="Raphael J."/>
            <person name="Moreira D."/>
            <person name="Kelley T."/>
            <person name="LaBaer J."/>
            <person name="Lin Y."/>
            <person name="Phelan M."/>
            <person name="Farmer A."/>
        </authorList>
    </citation>
    <scope>NUCLEOTIDE SEQUENCE [LARGE SCALE MRNA]</scope>
</reference>
<reference key="5">
    <citation type="submission" date="2004-06" db="EMBL/GenBank/DDBJ databases">
        <title>Cloning of human full open reading frames in Gateway(TM) system entry vector (pDONR201).</title>
        <authorList>
            <person name="Ebert L."/>
            <person name="Schick M."/>
            <person name="Neubert P."/>
            <person name="Schatten R."/>
            <person name="Henze S."/>
            <person name="Korn B."/>
        </authorList>
    </citation>
    <scope>NUCLEOTIDE SEQUENCE [LARGE SCALE MRNA]</scope>
</reference>
<reference key="6">
    <citation type="journal article" date="2006" name="Nature">
        <title>Analysis of the DNA sequence and duplication history of human chromosome 15.</title>
        <authorList>
            <person name="Zody M.C."/>
            <person name="Garber M."/>
            <person name="Sharpe T."/>
            <person name="Young S.K."/>
            <person name="Rowen L."/>
            <person name="O'Neill K."/>
            <person name="Whittaker C.A."/>
            <person name="Kamal M."/>
            <person name="Chang J.L."/>
            <person name="Cuomo C.A."/>
            <person name="Dewar K."/>
            <person name="FitzGerald M.G."/>
            <person name="Kodira C.D."/>
            <person name="Madan A."/>
            <person name="Qin S."/>
            <person name="Yang X."/>
            <person name="Abbasi N."/>
            <person name="Abouelleil A."/>
            <person name="Arachchi H.M."/>
            <person name="Baradarani L."/>
            <person name="Birditt B."/>
            <person name="Bloom S."/>
            <person name="Bloom T."/>
            <person name="Borowsky M.L."/>
            <person name="Burke J."/>
            <person name="Butler J."/>
            <person name="Cook A."/>
            <person name="DeArellano K."/>
            <person name="DeCaprio D."/>
            <person name="Dorris L. III"/>
            <person name="Dors M."/>
            <person name="Eichler E.E."/>
            <person name="Engels R."/>
            <person name="Fahey J."/>
            <person name="Fleetwood P."/>
            <person name="Friedman C."/>
            <person name="Gearin G."/>
            <person name="Hall J.L."/>
            <person name="Hensley G."/>
            <person name="Johnson E."/>
            <person name="Jones C."/>
            <person name="Kamat A."/>
            <person name="Kaur A."/>
            <person name="Locke D.P."/>
            <person name="Madan A."/>
            <person name="Munson G."/>
            <person name="Jaffe D.B."/>
            <person name="Lui A."/>
            <person name="Macdonald P."/>
            <person name="Mauceli E."/>
            <person name="Naylor J.W."/>
            <person name="Nesbitt R."/>
            <person name="Nicol R."/>
            <person name="O'Leary S.B."/>
            <person name="Ratcliffe A."/>
            <person name="Rounsley S."/>
            <person name="She X."/>
            <person name="Sneddon K.M.B."/>
            <person name="Stewart S."/>
            <person name="Sougnez C."/>
            <person name="Stone S.M."/>
            <person name="Topham K."/>
            <person name="Vincent D."/>
            <person name="Wang S."/>
            <person name="Zimmer A.R."/>
            <person name="Birren B.W."/>
            <person name="Hood L."/>
            <person name="Lander E.S."/>
            <person name="Nusbaum C."/>
        </authorList>
    </citation>
    <scope>NUCLEOTIDE SEQUENCE [LARGE SCALE GENOMIC DNA]</scope>
</reference>
<reference key="7">
    <citation type="submission" date="2005-07" db="EMBL/GenBank/DDBJ databases">
        <authorList>
            <person name="Mural R.J."/>
            <person name="Istrail S."/>
            <person name="Sutton G.G."/>
            <person name="Florea L."/>
            <person name="Halpern A.L."/>
            <person name="Mobarry C.M."/>
            <person name="Lippert R."/>
            <person name="Walenz B."/>
            <person name="Shatkay H."/>
            <person name="Dew I."/>
            <person name="Miller J.R."/>
            <person name="Flanigan M.J."/>
            <person name="Edwards N.J."/>
            <person name="Bolanos R."/>
            <person name="Fasulo D."/>
            <person name="Halldorsson B.V."/>
            <person name="Hannenhalli S."/>
            <person name="Turner R."/>
            <person name="Yooseph S."/>
            <person name="Lu F."/>
            <person name="Nusskern D.R."/>
            <person name="Shue B.C."/>
            <person name="Zheng X.H."/>
            <person name="Zhong F."/>
            <person name="Delcher A.L."/>
            <person name="Huson D.H."/>
            <person name="Kravitz S.A."/>
            <person name="Mouchard L."/>
            <person name="Reinert K."/>
            <person name="Remington K.A."/>
            <person name="Clark A.G."/>
            <person name="Waterman M.S."/>
            <person name="Eichler E.E."/>
            <person name="Adams M.D."/>
            <person name="Hunkapiller M.W."/>
            <person name="Myers E.W."/>
            <person name="Venter J.C."/>
        </authorList>
    </citation>
    <scope>NUCLEOTIDE SEQUENCE [LARGE SCALE GENOMIC DNA]</scope>
</reference>
<reference key="8">
    <citation type="journal article" date="2004" name="Genome Res.">
        <title>The status, quality, and expansion of the NIH full-length cDNA project: the Mammalian Gene Collection (MGC).</title>
        <authorList>
            <consortium name="The MGC Project Team"/>
        </authorList>
    </citation>
    <scope>NUCLEOTIDE SEQUENCE [LARGE SCALE MRNA]</scope>
    <source>
        <tissue>Lung</tissue>
    </source>
</reference>
<reference key="9">
    <citation type="journal article" date="1998" name="Mol. Cell. Biol.">
        <title>Simian virus 40 large T antigen stabilizes the TATA-binding protein-TFIIA complex on the TATA element.</title>
        <authorList>
            <person name="Damania B."/>
            <person name="Lieberman P."/>
            <person name="Alwine J.C."/>
        </authorList>
    </citation>
    <scope>INTERACTION WITH SV40 LARGE T ANTIGEN (MICROBIAL INFECTION)</scope>
</reference>
<reference key="10">
    <citation type="journal article" date="1999" name="J. Biol. Chem.">
        <title>A nuclear factor ASC-2, as a cancer-amplified transcriptional coactivator essential for ligand-dependent transactivation by nuclear receptors in vivo.</title>
        <authorList>
            <person name="Lee S.-K."/>
            <person name="Anzick S.L."/>
            <person name="Choi J.-E."/>
            <person name="Bubendorf L."/>
            <person name="Guan X.-Y."/>
            <person name="Jung Y.-K."/>
            <person name="Kallioniemi O.-P."/>
            <person name="Kononen J."/>
            <person name="Trent J.M."/>
            <person name="Azorsa D."/>
            <person name="Jhun B.-H."/>
            <person name="Cheong J.H."/>
            <person name="Lee Y.C."/>
            <person name="Meltzer P.S."/>
            <person name="Lee J.W."/>
        </authorList>
    </citation>
    <scope>INTERACTION WITH NCOA6</scope>
</reference>
<reference key="11">
    <citation type="journal article" date="2000" name="Cell Stress Chaperones">
        <title>Potential targets for HSF1 within the preinitiation complex.</title>
        <authorList>
            <person name="Yuan C.X."/>
            <person name="Gurley W.B."/>
        </authorList>
    </citation>
    <scope>INTERACTION WITH HSF1</scope>
</reference>
<reference key="12">
    <citation type="journal article" date="2000" name="Mol. Cell">
        <title>TAC, a TBP-sans-TAFs complex containing the unprocessed TFIIAalphabeta precursor and the TFIIAgamma subunit.</title>
        <authorList>
            <person name="Mitsiou D.J."/>
            <person name="Stunnenberg H.G."/>
        </authorList>
    </citation>
    <scope>FUNCTION</scope>
    <scope>SUBUNIT</scope>
    <scope>IDENTIFICATION IN A COMPLEX WITH GTF2A1 AND TBP</scope>
</reference>
<reference key="13">
    <citation type="journal article" date="2016" name="Nature">
        <title>Near-atomic resolution visualization of human transcription promoter opening.</title>
        <authorList>
            <person name="He Y."/>
            <person name="Yan C."/>
            <person name="Fang J."/>
            <person name="Inouye C."/>
            <person name="Tjian R."/>
            <person name="Ivanov I."/>
            <person name="Nogales E."/>
        </authorList>
    </citation>
    <scope>STRUCTURE BY ELECTRON MICROSCOPY (3.90 ANGSTROMS)</scope>
    <scope>SUBUNIT</scope>
</reference>